<feature type="chain" id="PRO_1000071042" description="UDP-N-acetylenolpyruvoylglucosamine reductase">
    <location>
        <begin position="1"/>
        <end position="306"/>
    </location>
</feature>
<feature type="domain" description="FAD-binding PCMH-type" evidence="1">
    <location>
        <begin position="34"/>
        <end position="199"/>
    </location>
</feature>
<feature type="region of interest" description="Disordered" evidence="2">
    <location>
        <begin position="215"/>
        <end position="234"/>
    </location>
</feature>
<feature type="compositionally biased region" description="Polar residues" evidence="2">
    <location>
        <begin position="220"/>
        <end position="232"/>
    </location>
</feature>
<feature type="active site" evidence="1">
    <location>
        <position position="179"/>
    </location>
</feature>
<feature type="active site" description="Proton donor" evidence="1">
    <location>
        <position position="228"/>
    </location>
</feature>
<feature type="active site" evidence="1">
    <location>
        <position position="298"/>
    </location>
</feature>
<gene>
    <name evidence="1" type="primary">murB</name>
    <name type="ordered locus">Swit_3944</name>
</gene>
<sequence>MSPAASSATRPSTLPPVRGRLTAGAPLAPLVWFKSGGAAEWLFEPADVDDLSDFLAALDPAVPVMGLGLGSNLIVRDGGVPGVVVRLGKPFARVERLDATTLRCGGGASGILVSSTARDAGIGGVEFLRSIPGTVGGFVRMNGGAYGREVKDVLVEGEVVLRSGERRVLSLAELGYTYRHSALPEGAIVVAATFRGHAEAPAVVQAEMDRIAAEREASQPLRSRTGGSTFKNPQGHKAWQLVDAAGCRGLTRGDAQVSEKHCNFLLNLGTASSADIEGLGEEVRERVKANSGVTLEWEIQRVGVNP</sequence>
<name>MURB_RHIWR</name>
<dbReference type="EC" id="1.3.1.98" evidence="1"/>
<dbReference type="EMBL" id="CP000699">
    <property type="protein sequence ID" value="ABQ70289.1"/>
    <property type="molecule type" value="Genomic_DNA"/>
</dbReference>
<dbReference type="SMR" id="A5VDC3"/>
<dbReference type="STRING" id="392499.Swit_3944"/>
<dbReference type="PaxDb" id="392499-Swit_3944"/>
<dbReference type="KEGG" id="swi:Swit_3944"/>
<dbReference type="eggNOG" id="COG0812">
    <property type="taxonomic scope" value="Bacteria"/>
</dbReference>
<dbReference type="HOGENOM" id="CLU_035304_1_0_5"/>
<dbReference type="UniPathway" id="UPA00219"/>
<dbReference type="Proteomes" id="UP000001989">
    <property type="component" value="Chromosome"/>
</dbReference>
<dbReference type="GO" id="GO:0005829">
    <property type="term" value="C:cytosol"/>
    <property type="evidence" value="ECO:0007669"/>
    <property type="project" value="TreeGrafter"/>
</dbReference>
<dbReference type="GO" id="GO:0071949">
    <property type="term" value="F:FAD binding"/>
    <property type="evidence" value="ECO:0007669"/>
    <property type="project" value="InterPro"/>
</dbReference>
<dbReference type="GO" id="GO:0008762">
    <property type="term" value="F:UDP-N-acetylmuramate dehydrogenase activity"/>
    <property type="evidence" value="ECO:0007669"/>
    <property type="project" value="UniProtKB-UniRule"/>
</dbReference>
<dbReference type="GO" id="GO:0051301">
    <property type="term" value="P:cell division"/>
    <property type="evidence" value="ECO:0007669"/>
    <property type="project" value="UniProtKB-KW"/>
</dbReference>
<dbReference type="GO" id="GO:0071555">
    <property type="term" value="P:cell wall organization"/>
    <property type="evidence" value="ECO:0007669"/>
    <property type="project" value="UniProtKB-KW"/>
</dbReference>
<dbReference type="GO" id="GO:0009252">
    <property type="term" value="P:peptidoglycan biosynthetic process"/>
    <property type="evidence" value="ECO:0007669"/>
    <property type="project" value="UniProtKB-UniRule"/>
</dbReference>
<dbReference type="GO" id="GO:0008360">
    <property type="term" value="P:regulation of cell shape"/>
    <property type="evidence" value="ECO:0007669"/>
    <property type="project" value="UniProtKB-KW"/>
</dbReference>
<dbReference type="Gene3D" id="3.30.465.10">
    <property type="match status" value="1"/>
</dbReference>
<dbReference type="Gene3D" id="3.90.78.10">
    <property type="entry name" value="UDP-N-acetylenolpyruvoylglucosamine reductase, C-terminal domain"/>
    <property type="match status" value="1"/>
</dbReference>
<dbReference type="Gene3D" id="3.30.43.10">
    <property type="entry name" value="Uridine Diphospho-n-acetylenolpyruvylglucosamine Reductase, domain 2"/>
    <property type="match status" value="1"/>
</dbReference>
<dbReference type="HAMAP" id="MF_00037">
    <property type="entry name" value="MurB"/>
    <property type="match status" value="1"/>
</dbReference>
<dbReference type="InterPro" id="IPR016166">
    <property type="entry name" value="FAD-bd_PCMH"/>
</dbReference>
<dbReference type="InterPro" id="IPR036318">
    <property type="entry name" value="FAD-bd_PCMH-like_sf"/>
</dbReference>
<dbReference type="InterPro" id="IPR016167">
    <property type="entry name" value="FAD-bd_PCMH_sub1"/>
</dbReference>
<dbReference type="InterPro" id="IPR016169">
    <property type="entry name" value="FAD-bd_PCMH_sub2"/>
</dbReference>
<dbReference type="InterPro" id="IPR003170">
    <property type="entry name" value="MurB"/>
</dbReference>
<dbReference type="InterPro" id="IPR011601">
    <property type="entry name" value="MurB_C"/>
</dbReference>
<dbReference type="InterPro" id="IPR036635">
    <property type="entry name" value="MurB_C_sf"/>
</dbReference>
<dbReference type="InterPro" id="IPR006094">
    <property type="entry name" value="Oxid_FAD_bind_N"/>
</dbReference>
<dbReference type="NCBIfam" id="TIGR00179">
    <property type="entry name" value="murB"/>
    <property type="match status" value="1"/>
</dbReference>
<dbReference type="NCBIfam" id="NF010480">
    <property type="entry name" value="PRK13905.1"/>
    <property type="match status" value="1"/>
</dbReference>
<dbReference type="PANTHER" id="PTHR21071">
    <property type="entry name" value="UDP-N-ACETYLENOLPYRUVOYLGLUCOSAMINE REDUCTASE"/>
    <property type="match status" value="1"/>
</dbReference>
<dbReference type="PANTHER" id="PTHR21071:SF4">
    <property type="entry name" value="UDP-N-ACETYLENOLPYRUVOYLGLUCOSAMINE REDUCTASE"/>
    <property type="match status" value="1"/>
</dbReference>
<dbReference type="Pfam" id="PF01565">
    <property type="entry name" value="FAD_binding_4"/>
    <property type="match status" value="1"/>
</dbReference>
<dbReference type="Pfam" id="PF02873">
    <property type="entry name" value="MurB_C"/>
    <property type="match status" value="1"/>
</dbReference>
<dbReference type="SUPFAM" id="SSF56176">
    <property type="entry name" value="FAD-binding/transporter-associated domain-like"/>
    <property type="match status" value="1"/>
</dbReference>
<dbReference type="SUPFAM" id="SSF56194">
    <property type="entry name" value="Uridine diphospho-N-Acetylenolpyruvylglucosamine reductase, MurB, C-terminal domain"/>
    <property type="match status" value="1"/>
</dbReference>
<dbReference type="PROSITE" id="PS51387">
    <property type="entry name" value="FAD_PCMH"/>
    <property type="match status" value="1"/>
</dbReference>
<comment type="function">
    <text evidence="1">Cell wall formation.</text>
</comment>
<comment type="catalytic activity">
    <reaction evidence="1">
        <text>UDP-N-acetyl-alpha-D-muramate + NADP(+) = UDP-N-acetyl-3-O-(1-carboxyvinyl)-alpha-D-glucosamine + NADPH + H(+)</text>
        <dbReference type="Rhea" id="RHEA:12248"/>
        <dbReference type="ChEBI" id="CHEBI:15378"/>
        <dbReference type="ChEBI" id="CHEBI:57783"/>
        <dbReference type="ChEBI" id="CHEBI:58349"/>
        <dbReference type="ChEBI" id="CHEBI:68483"/>
        <dbReference type="ChEBI" id="CHEBI:70757"/>
        <dbReference type="EC" id="1.3.1.98"/>
    </reaction>
</comment>
<comment type="cofactor">
    <cofactor evidence="1">
        <name>FAD</name>
        <dbReference type="ChEBI" id="CHEBI:57692"/>
    </cofactor>
</comment>
<comment type="pathway">
    <text evidence="1">Cell wall biogenesis; peptidoglycan biosynthesis.</text>
</comment>
<comment type="subcellular location">
    <subcellularLocation>
        <location evidence="1">Cytoplasm</location>
    </subcellularLocation>
</comment>
<comment type="similarity">
    <text evidence="1">Belongs to the MurB family.</text>
</comment>
<evidence type="ECO:0000255" key="1">
    <source>
        <dbReference type="HAMAP-Rule" id="MF_00037"/>
    </source>
</evidence>
<evidence type="ECO:0000256" key="2">
    <source>
        <dbReference type="SAM" id="MobiDB-lite"/>
    </source>
</evidence>
<protein>
    <recommendedName>
        <fullName evidence="1">UDP-N-acetylenolpyruvoylglucosamine reductase</fullName>
        <ecNumber evidence="1">1.3.1.98</ecNumber>
    </recommendedName>
    <alternativeName>
        <fullName evidence="1">UDP-N-acetylmuramate dehydrogenase</fullName>
    </alternativeName>
</protein>
<accession>A5VDC3</accession>
<proteinExistence type="inferred from homology"/>
<organism>
    <name type="scientific">Rhizorhabdus wittichii (strain DSM 6014 / CCUG 31198 / JCM 15750 / NBRC 105917 / EY 4224 / RW1)</name>
    <name type="common">Sphingomonas wittichii</name>
    <dbReference type="NCBI Taxonomy" id="392499"/>
    <lineage>
        <taxon>Bacteria</taxon>
        <taxon>Pseudomonadati</taxon>
        <taxon>Pseudomonadota</taxon>
        <taxon>Alphaproteobacteria</taxon>
        <taxon>Sphingomonadales</taxon>
        <taxon>Sphingomonadaceae</taxon>
        <taxon>Rhizorhabdus</taxon>
    </lineage>
</organism>
<keyword id="KW-0131">Cell cycle</keyword>
<keyword id="KW-0132">Cell division</keyword>
<keyword id="KW-0133">Cell shape</keyword>
<keyword id="KW-0961">Cell wall biogenesis/degradation</keyword>
<keyword id="KW-0963">Cytoplasm</keyword>
<keyword id="KW-0274">FAD</keyword>
<keyword id="KW-0285">Flavoprotein</keyword>
<keyword id="KW-0521">NADP</keyword>
<keyword id="KW-0560">Oxidoreductase</keyword>
<keyword id="KW-0573">Peptidoglycan synthesis</keyword>
<keyword id="KW-1185">Reference proteome</keyword>
<reference key="1">
    <citation type="journal article" date="2010" name="J. Bacteriol.">
        <title>Genome sequence of the dioxin-mineralizing bacterium Sphingomonas wittichii RW1.</title>
        <authorList>
            <person name="Miller T.R."/>
            <person name="Delcher A.L."/>
            <person name="Salzberg S.L."/>
            <person name="Saunders E."/>
            <person name="Detter J.C."/>
            <person name="Halden R.U."/>
        </authorList>
    </citation>
    <scope>NUCLEOTIDE SEQUENCE [LARGE SCALE GENOMIC DNA]</scope>
    <source>
        <strain>DSM 6014 / CCUG 31198 / JCM 15750 / NBRC 105917 / EY 4224 / RW1</strain>
    </source>
</reference>